<dbReference type="EMBL" id="ACOQ01000001">
    <property type="protein sequence ID" value="EEP64553.1"/>
    <property type="status" value="ALT_INIT"/>
    <property type="molecule type" value="Genomic_DNA"/>
</dbReference>
<dbReference type="EMBL" id="CP008896">
    <property type="protein sequence ID" value="AIG01393.1"/>
    <property type="molecule type" value="Genomic_DNA"/>
</dbReference>
<dbReference type="RefSeq" id="WP_038441498.1">
    <property type="nucleotide sequence ID" value="NZ_CP008896.1"/>
</dbReference>
<dbReference type="KEGG" id="pfn:HZ99_04100"/>
<dbReference type="GO" id="GO:0005576">
    <property type="term" value="C:extracellular region"/>
    <property type="evidence" value="ECO:0007669"/>
    <property type="project" value="UniProtKB-SubCell"/>
</dbReference>
<dbReference type="GO" id="GO:0009289">
    <property type="term" value="C:pilus"/>
    <property type="evidence" value="ECO:0007669"/>
    <property type="project" value="UniProtKB-SubCell"/>
</dbReference>
<dbReference type="GO" id="GO:0007155">
    <property type="term" value="P:cell adhesion"/>
    <property type="evidence" value="ECO:0007669"/>
    <property type="project" value="UniProtKB-KW"/>
</dbReference>
<gene>
    <name evidence="6" type="primary">fapE</name>
    <name evidence="7" type="ORF">HZ99_04100</name>
    <name evidence="6" type="ORF">PSUK4_00050</name>
</gene>
<reference key="1">
    <citation type="journal article" date="2010" name="Mol. Microbiol.">
        <title>Functional amyloid in Pseudomonas.</title>
        <authorList>
            <person name="Dueholm M.S."/>
            <person name="Petersen S.V."/>
            <person name="Soenderkaer M."/>
            <person name="Larsen P."/>
            <person name="Christiansen G."/>
            <person name="Hein K.L."/>
            <person name="Enghild J.J."/>
            <person name="Nielsen J.L."/>
            <person name="Nielsen K.L."/>
            <person name="Nielsen P.H."/>
            <person name="Otzen D.E."/>
        </authorList>
    </citation>
    <scope>NUCLEOTIDE SEQUENCE [GENOMIC DNA]</scope>
    <scope>FUNCTION</scope>
    <source>
        <strain>DSM 29051 / UK4</strain>
    </source>
</reference>
<reference key="2">
    <citation type="journal article" date="2014" name="Genome Announc.">
        <title>Complete Genome Sequence of Pseudomonas sp. UK4, a Model Organism for Studies of Functional Amyloids in Pseudomonas.</title>
        <authorList>
            <person name="Dueholm M.S."/>
            <person name="Danielsen H.N."/>
            <person name="Nielsen P.H."/>
        </authorList>
    </citation>
    <scope>NUCLEOTIDE SEQUENCE [LARGE SCALE GENOMIC DNA]</scope>
    <source>
        <strain>DSM 29051 / UK4</strain>
    </source>
</reference>
<reference key="3">
    <citation type="journal article" date="2017" name="Nat. Commun.">
        <title>A new class of hybrid secretion system is employed in Pseudomonas amyloid biogenesis.</title>
        <authorList>
            <person name="Rouse S.L."/>
            <person name="Hawthorne W.J."/>
            <person name="Berry J.L."/>
            <person name="Chorev D.S."/>
            <person name="Ionescu S.A."/>
            <person name="Lambert S."/>
            <person name="Stylianou F."/>
            <person name="Ewert W."/>
            <person name="Mackie U."/>
            <person name="Morgan R.M.L."/>
            <person name="Otzen D."/>
            <person name="Herbst F.A."/>
            <person name="Nielsen P.H."/>
            <person name="Dueholm M."/>
            <person name="Bayley H."/>
            <person name="Robinson C.V."/>
            <person name="Hare S."/>
            <person name="Matthews S."/>
        </authorList>
    </citation>
    <scope>PROTEIN SEQUENCE OF 72-86; 97-121; 133-209 AND 220-241</scope>
    <scope>FUNCTION</scope>
    <scope>SUBCELLULAR LOCATION</scope>
    <source>
        <strain>DSM 29051 / UK4</strain>
    </source>
</reference>
<reference key="4">
    <citation type="journal article" date="2013" name="MicrobiologyOpen">
        <title>Expression of Fap amyloids in Pseudomonas aeruginosa, P. fluorescens, and P. putida results in aggregation and increased biofilm formation.</title>
        <authorList>
            <person name="Dueholm M.S."/>
            <person name="Soendergaard M.T."/>
            <person name="Nilsson M."/>
            <person name="Christiansen G."/>
            <person name="Stensballe A."/>
            <person name="Overgaard M.T."/>
            <person name="Givskov M."/>
            <person name="Tolker-Nielsen T."/>
            <person name="Otzen D.E."/>
            <person name="Nielsen P.H."/>
        </authorList>
    </citation>
    <scope>FUNCTION</scope>
    <scope>SUBUNIT</scope>
    <scope>SUBCELLULAR LOCATION</scope>
    <scope>DISRUPTION PHENOTYPE</scope>
    <source>
        <strain>DSM 29051 / UK4</strain>
    </source>
</reference>
<reference key="5">
    <citation type="journal article" date="2015" name="Front. Microbiol.">
        <title>Functional bacterial amyloid increases Pseudomonas biofilm hydrophobicity and stiffness.</title>
        <authorList>
            <person name="Zeng G."/>
            <person name="Vad B.S."/>
            <person name="Dueholm M.S."/>
            <person name="Christiansen G."/>
            <person name="Nilsson M."/>
            <person name="Tolker-Nielsen T."/>
            <person name="Nielsen P.H."/>
            <person name="Meyer R.L."/>
            <person name="Otzen D.E."/>
        </authorList>
    </citation>
    <scope>FUNCTION</scope>
    <scope>DISRUPTION PHENOTYPE</scope>
    <source>
        <strain>DSM 29051 / UK4</strain>
    </source>
</reference>
<accession>P0DXF7</accession>
<name>FAPE_PSEFL</name>
<protein>
    <recommendedName>
        <fullName evidence="8">Functional amyloid sbunit FapE</fullName>
    </recommendedName>
    <alternativeName>
        <fullName evidence="8">Fibril amyloid subunit FapE</fullName>
    </alternativeName>
</protein>
<evidence type="ECO:0000255" key="1"/>
<evidence type="ECO:0000269" key="2">
    <source>
    </source>
</evidence>
<evidence type="ECO:0000269" key="3">
    <source>
    </source>
</evidence>
<evidence type="ECO:0000269" key="4">
    <source>
    </source>
</evidence>
<evidence type="ECO:0000269" key="5">
    <source>
    </source>
</evidence>
<evidence type="ECO:0000303" key="6">
    <source>
    </source>
</evidence>
<evidence type="ECO:0000303" key="7">
    <source>
    </source>
</evidence>
<evidence type="ECO:0000305" key="8"/>
<sequence>MNTSRWLTALCLAASMPAYAASAFKPIEMSDAELAELRGRFVMPGRIISFGIVMSTTWTNAAGDTSTVSANMHIDSSTITPQFYVQSTGSVGNGTNRDPGTGTVVGGAGLGSGQGVTQTVRAAGDGNTAYNNVGINVSENGLSPANVAQSGHALMAGGSFTTESAAGRVSVSANNGGVQMAIAAHNNQGNALQQIGGGNVLQGTVLQGNSNFVNNMTQLNVALGNNGLNAGALNCNLDQLKGLRTLGY</sequence>
<keyword id="KW-0034">Amyloid</keyword>
<keyword id="KW-0130">Cell adhesion</keyword>
<keyword id="KW-0903">Direct protein sequencing</keyword>
<keyword id="KW-0281">Fimbrium</keyword>
<keyword id="KW-0964">Secreted</keyword>
<keyword id="KW-0732">Signal</keyword>
<feature type="signal peptide" evidence="1">
    <location>
        <begin position="1"/>
        <end position="20"/>
    </location>
</feature>
<feature type="chain" id="PRO_0000461517" description="Functional amyloid sbunit FapE" evidence="1">
    <location>
        <begin position="21"/>
        <end position="248"/>
    </location>
</feature>
<proteinExistence type="evidence at protein level"/>
<comment type="function">
    <text evidence="2 3 4 5">A minor component of the functional amyloid in this bacterium (PubMed:23504942). Upon overexpression of the endogenous six-gene locus (fapA-fapF) in situ, cells form large clumps during liquid growth, make large amounts of biofilm and produce amyloid fibrils (PubMed:23504942, PubMed:26500638). Expression of the 6 gene operon in E.coli strain BL21(DE3) induces flocculation and biofilm formation with copious extracellular fibrils (PubMed:20572935, PubMed:28811582).</text>
</comment>
<comment type="subunit">
    <text evidence="3">A minor component of purified amyloid fibrils. Fibrils are resistant to boiling in 2% (weight/vol) SDS and require &gt;90% (vol/vol) formic acid to dissolve.</text>
</comment>
<comment type="subcellular location">
    <subcellularLocation>
        <location evidence="3">Fimbrium</location>
    </subcellularLocation>
    <subcellularLocation>
        <location evidence="3 5">Secreted</location>
    </subcellularLocation>
    <text evidence="3 5">Part of an extracellular amyloid fibril (PubMed:23504942). Secreted through the inner membrane by the Sec pathway, exported from the periplasm by FapF (PubMed:28811582).</text>
</comment>
<comment type="disruption phenotype">
    <text evidence="3 4">Deletion of just fapE in an overexpressing strain yields cells without amyloid fibrils (PubMed:26500638). Deletion of the entire fapA-fapF six-gene locus shows no visible growth phenotype (PubMed:23504942, PubMed:26500638).</text>
</comment>
<comment type="similarity">
    <text evidence="8">Belongs to the FapE family.</text>
</comment>
<comment type="sequence caution" evidence="8">
    <conflict type="erroneous initiation">
        <sequence resource="EMBL-CDS" id="EEP64553"/>
    </conflict>
    <text>Extended N-terminus.</text>
</comment>
<organism>
    <name type="scientific">Pseudomonas fluorescens</name>
    <dbReference type="NCBI Taxonomy" id="294"/>
    <lineage>
        <taxon>Bacteria</taxon>
        <taxon>Pseudomonadati</taxon>
        <taxon>Pseudomonadota</taxon>
        <taxon>Gammaproteobacteria</taxon>
        <taxon>Pseudomonadales</taxon>
        <taxon>Pseudomonadaceae</taxon>
        <taxon>Pseudomonas</taxon>
    </lineage>
</organism>